<name>IFNT3_BOVIN</name>
<sequence>CYLSEDHMLGARENLRLLARMNRLSPHPCLQDRKDFGLPQEMVEGSQLQKDQAISVLHEMLQQCFNLFHIEHSSAAWNTTLLEQLCTGLQQQLEDLDACLGPVMGEKDSDMGRMGPILTVKKYFQDIHVYLKEKEYSDCAWEIIRVEMMRALSSSTTLQKRLRKMGGDLNSL</sequence>
<dbReference type="EMBL" id="AF196324">
    <property type="protein sequence ID" value="AAF08675.1"/>
    <property type="molecule type" value="mRNA"/>
</dbReference>
<dbReference type="EMBL" id="AF196325">
    <property type="protein sequence ID" value="AAF08676.1"/>
    <property type="molecule type" value="mRNA"/>
</dbReference>
<dbReference type="EMBL" id="AF196326">
    <property type="protein sequence ID" value="AAF08677.1"/>
    <property type="molecule type" value="mRNA"/>
</dbReference>
<dbReference type="EMBL" id="AF196327">
    <property type="protein sequence ID" value="AAF08678.1"/>
    <property type="molecule type" value="mRNA"/>
</dbReference>
<dbReference type="EMBL" id="AF270471">
    <property type="protein sequence ID" value="AAF74783.1"/>
    <property type="molecule type" value="mRNA"/>
</dbReference>
<dbReference type="RefSeq" id="NP_001161747.1">
    <property type="nucleotide sequence ID" value="NM_001168275.1"/>
</dbReference>
<dbReference type="SMR" id="P56831"/>
<dbReference type="FunCoup" id="P56831">
    <property type="interactions" value="78"/>
</dbReference>
<dbReference type="GlyCosmos" id="P56831">
    <property type="glycosylation" value="1 site, No reported glycans"/>
</dbReference>
<dbReference type="GlyGen" id="P56831">
    <property type="glycosylation" value="1 site"/>
</dbReference>
<dbReference type="GeneID" id="100313956"/>
<dbReference type="KEGG" id="bta:100313956"/>
<dbReference type="CTD" id="100313956"/>
<dbReference type="InParanoid" id="P56831"/>
<dbReference type="OrthoDB" id="9833506at2759"/>
<dbReference type="Proteomes" id="UP000009136">
    <property type="component" value="Unplaced"/>
</dbReference>
<dbReference type="GO" id="GO:0005615">
    <property type="term" value="C:extracellular space"/>
    <property type="evidence" value="ECO:0000318"/>
    <property type="project" value="GO_Central"/>
</dbReference>
<dbReference type="GO" id="GO:0005125">
    <property type="term" value="F:cytokine activity"/>
    <property type="evidence" value="ECO:0000318"/>
    <property type="project" value="GO_Central"/>
</dbReference>
<dbReference type="GO" id="GO:0005179">
    <property type="term" value="F:hormone activity"/>
    <property type="evidence" value="ECO:0007669"/>
    <property type="project" value="UniProtKB-KW"/>
</dbReference>
<dbReference type="GO" id="GO:0005132">
    <property type="term" value="F:type I interferon receptor binding"/>
    <property type="evidence" value="ECO:0000318"/>
    <property type="project" value="GO_Central"/>
</dbReference>
<dbReference type="GO" id="GO:0002250">
    <property type="term" value="P:adaptive immune response"/>
    <property type="evidence" value="ECO:0000318"/>
    <property type="project" value="GO_Central"/>
</dbReference>
<dbReference type="GO" id="GO:0002312">
    <property type="term" value="P:B cell activation involved in immune response"/>
    <property type="evidence" value="ECO:0000318"/>
    <property type="project" value="GO_Central"/>
</dbReference>
<dbReference type="GO" id="GO:0051607">
    <property type="term" value="P:defense response to virus"/>
    <property type="evidence" value="ECO:0007669"/>
    <property type="project" value="UniProtKB-KW"/>
</dbReference>
<dbReference type="GO" id="GO:0007565">
    <property type="term" value="P:female pregnancy"/>
    <property type="evidence" value="ECO:0007669"/>
    <property type="project" value="UniProtKB-KW"/>
</dbReference>
<dbReference type="GO" id="GO:0006959">
    <property type="term" value="P:humoral immune response"/>
    <property type="evidence" value="ECO:0000318"/>
    <property type="project" value="GO_Central"/>
</dbReference>
<dbReference type="GO" id="GO:0002323">
    <property type="term" value="P:natural killer cell activation involved in immune response"/>
    <property type="evidence" value="ECO:0000318"/>
    <property type="project" value="GO_Central"/>
</dbReference>
<dbReference type="GO" id="GO:0009891">
    <property type="term" value="P:positive regulation of biosynthetic process"/>
    <property type="evidence" value="ECO:0007669"/>
    <property type="project" value="UniProtKB-ARBA"/>
</dbReference>
<dbReference type="GO" id="GO:0043330">
    <property type="term" value="P:response to exogenous dsRNA"/>
    <property type="evidence" value="ECO:0000318"/>
    <property type="project" value="GO_Central"/>
</dbReference>
<dbReference type="GO" id="GO:0002286">
    <property type="term" value="P:T cell activation involved in immune response"/>
    <property type="evidence" value="ECO:0000318"/>
    <property type="project" value="GO_Central"/>
</dbReference>
<dbReference type="GO" id="GO:0060337">
    <property type="term" value="P:type I interferon-mediated signaling pathway"/>
    <property type="evidence" value="ECO:0000318"/>
    <property type="project" value="GO_Central"/>
</dbReference>
<dbReference type="CDD" id="cd00095">
    <property type="entry name" value="IFab"/>
    <property type="match status" value="1"/>
</dbReference>
<dbReference type="FunFam" id="1.20.1250.10:FF:000001">
    <property type="entry name" value="Interferon alpha"/>
    <property type="match status" value="1"/>
</dbReference>
<dbReference type="Gene3D" id="1.20.1250.10">
    <property type="match status" value="1"/>
</dbReference>
<dbReference type="InterPro" id="IPR009079">
    <property type="entry name" value="4_helix_cytokine-like_core"/>
</dbReference>
<dbReference type="InterPro" id="IPR000471">
    <property type="entry name" value="Interferon_alpha/beta/delta"/>
</dbReference>
<dbReference type="PANTHER" id="PTHR11691:SF37">
    <property type="entry name" value="INTERFERON OMEGA-1"/>
    <property type="match status" value="1"/>
</dbReference>
<dbReference type="PANTHER" id="PTHR11691">
    <property type="entry name" value="TYPE I INTERFERON"/>
    <property type="match status" value="1"/>
</dbReference>
<dbReference type="Pfam" id="PF00143">
    <property type="entry name" value="Interferon"/>
    <property type="match status" value="1"/>
</dbReference>
<dbReference type="PRINTS" id="PR00266">
    <property type="entry name" value="INTERFERONAB"/>
</dbReference>
<dbReference type="SMART" id="SM00076">
    <property type="entry name" value="IFabd"/>
    <property type="match status" value="1"/>
</dbReference>
<dbReference type="SUPFAM" id="SSF47266">
    <property type="entry name" value="4-helical cytokines"/>
    <property type="match status" value="1"/>
</dbReference>
<dbReference type="PROSITE" id="PS00252">
    <property type="entry name" value="INTERFERON_A_B_D"/>
    <property type="match status" value="1"/>
</dbReference>
<accession>P56831</accession>
<accession>Q9MZ09</accession>
<organism>
    <name type="scientific">Bos taurus</name>
    <name type="common">Bovine</name>
    <dbReference type="NCBI Taxonomy" id="9913"/>
    <lineage>
        <taxon>Eukaryota</taxon>
        <taxon>Metazoa</taxon>
        <taxon>Chordata</taxon>
        <taxon>Craniata</taxon>
        <taxon>Vertebrata</taxon>
        <taxon>Euteleostomi</taxon>
        <taxon>Mammalia</taxon>
        <taxon>Eutheria</taxon>
        <taxon>Laurasiatheria</taxon>
        <taxon>Artiodactyla</taxon>
        <taxon>Ruminantia</taxon>
        <taxon>Pecora</taxon>
        <taxon>Bovidae</taxon>
        <taxon>Bovinae</taxon>
        <taxon>Bos</taxon>
    </lineage>
</organism>
<proteinExistence type="evidence at transcript level"/>
<evidence type="ECO:0000250" key="1"/>
<evidence type="ECO:0000255" key="2"/>
<evidence type="ECO:0000269" key="3">
    <source ref="1"/>
</evidence>
<evidence type="ECO:0000305" key="4"/>
<keyword id="KW-0051">Antiviral defense</keyword>
<keyword id="KW-0202">Cytokine</keyword>
<keyword id="KW-1015">Disulfide bond</keyword>
<keyword id="KW-0325">Glycoprotein</keyword>
<keyword id="KW-0372">Hormone</keyword>
<keyword id="KW-0635">Pregnancy</keyword>
<keyword id="KW-1185">Reference proteome</keyword>
<keyword id="KW-0964">Secreted</keyword>
<comment type="function">
    <text>Paracrine hormone primarily responsible for maternal recognition of pregnancy. Interacts with endometrial receptors, probably type I interferon receptors, and blocks estrogen receptor expression, preventing the estrogen-induced increase in oxytocin receptor expression in the endometrium. This results in the suppression of the pulsatile endometrial release of the luteolytic hormone prostaglandin F2-alpha, hindering the regression of the corpus luteum (luteolysis) and therefore a return to ovarian cyclicity. This, and a possible direct effect of IFN-tau on prostaglandin synthesis, leads in turn to continued ovarian progesterone secretion, which stimulates the secretion by the endometrium of the nutrients required for the growth of the conceptus. In summary, displays particularly high antiviral and antiproliferative potency concurrently with particular weak cytotoxicity, high antiluteolytic activity and immunomodulatory properties. In contrast with other IFNs, IFN-tau is not virally inducible.</text>
</comment>
<comment type="subcellular location">
    <subcellularLocation>
        <location>Secreted</location>
    </subcellularLocation>
    <text>Secreted into the uterine lumen.</text>
</comment>
<comment type="tissue specificity">
    <text>Constitutively and exclusively expressed in the mononuclear cells of the extraembryonic trophectoderm.</text>
</comment>
<comment type="developmental stage">
    <text>Major secretory product synthesized by the bovine conceptus between days 15 and 25 of pregnancy.</text>
</comment>
<comment type="polymorphism">
    <text evidence="3">There seems to be five variants of IFN-tau 3: A (shown here), B, C, D and E.</text>
</comment>
<comment type="miscellaneous">
    <text>IFN-tau genes are intronless. They evolved from IFN-omega genes in the ruminantia suborder and have continued to duplicate independently in different lineages of the ruminantia. They code for proteins very similar in sequence but with different biological potency and pattern of expression.</text>
</comment>
<comment type="similarity">
    <text evidence="4">Belongs to the alpha/beta interferon family. IFN-alphaII subfamily.</text>
</comment>
<protein>
    <recommendedName>
        <fullName>Interferon tau-3</fullName>
        <shortName>IFN-tau-3</shortName>
    </recommendedName>
    <alternativeName>
        <fullName>Antiluteolysin</fullName>
    </alternativeName>
    <alternativeName>
        <fullName>Trophoblast antiluteolytic protein</fullName>
    </alternativeName>
    <alternativeName>
        <fullName>Trophoblast protein 1</fullName>
        <shortName>TP-1</shortName>
    </alternativeName>
    <alternativeName>
        <fullName>Trophoblastin</fullName>
    </alternativeName>
</protein>
<feature type="chain" id="PRO_0000154308" description="Interferon tau-3">
    <location>
        <begin position="1"/>
        <end position="172"/>
    </location>
</feature>
<feature type="glycosylation site" description="N-linked (GlcNAc...) asparagine" evidence="2">
    <location>
        <position position="78"/>
    </location>
</feature>
<feature type="disulfide bond" evidence="1">
    <location>
        <begin position="1"/>
        <end position="99"/>
    </location>
</feature>
<feature type="disulfide bond" evidence="1">
    <location>
        <begin position="29"/>
        <end position="139"/>
    </location>
</feature>
<feature type="sequence variant" description="In IFN-tau3D." evidence="3">
    <original>S</original>
    <variation>P</variation>
    <location>
        <position position="25"/>
    </location>
</feature>
<feature type="sequence variant" description="In IFN-tau3B." evidence="3">
    <original>A</original>
    <variation>S</variation>
    <location>
        <position position="76"/>
    </location>
</feature>
<feature type="sequence variant" description="In IFN-tau3E." evidence="3">
    <original>D</original>
    <variation>G</variation>
    <location>
        <position position="126"/>
    </location>
</feature>
<feature type="sequence variant" description="In IFN-tau3C." evidence="3">
    <original>V</original>
    <variation>A</variation>
    <location>
        <position position="129"/>
    </location>
</feature>
<feature type="sequence variant" description="In IFN-tau3E." evidence="3">
    <original>V</original>
    <variation>M</variation>
    <location>
        <position position="146"/>
    </location>
</feature>
<gene>
    <name type="primary">IFNT3</name>
</gene>
<reference key="1">
    <citation type="submission" date="1999-10" db="EMBL/GenBank/DDBJ databases">
        <title>The expressed genes for bovine interferon-tau: identification and expression during conceptus development.</title>
        <authorList>
            <person name="Larson S.F."/>
            <person name="Liu L."/>
            <person name="Winkelman G.L."/>
            <person name="Kubisch H.M."/>
            <person name="Bixby J.A."/>
            <person name="Roberts R.M."/>
            <person name="Ealy A.D."/>
        </authorList>
    </citation>
    <scope>NUCLEOTIDE SEQUENCE [MRNA] (IFN-TAU3A; IFN-TAU3B; IFN-TAU3C AND IFN-TAU3D)</scope>
    <scope>VARIANTS PRO-25; SER-76; GLY-126; ALA-129 AND MET-146</scope>
    <scope>POLYMORPHISM</scope>
    <source>
        <tissue>Blastocyst</tissue>
        <tissue>Embryo</tissue>
    </source>
</reference>
<reference key="2">
    <citation type="submission" date="2000-05" db="EMBL/GenBank/DDBJ databases">
        <title>Polymorphisms among the expressed genes for bovine interferon-tau: identification and expression during early placental development.</title>
        <authorList>
            <person name="Larson S.F."/>
            <person name="Liu L."/>
            <person name="Winkelman G.L."/>
            <person name="Kubisch H.M."/>
            <person name="Alexenko A.P."/>
            <person name="Bixby J.A."/>
            <person name="Roberts R.M."/>
            <person name="Ealy A.D."/>
        </authorList>
    </citation>
    <scope>NUCLEOTIDE SEQUENCE [MRNA] (IFN-TAU3E)</scope>
    <source>
        <tissue>Blastocyst</tissue>
    </source>
</reference>
<reference key="3">
    <citation type="journal article" date="1995" name="J. Interferon Cytokine Res.">
        <title>A three-dimensional model of interferon-tau.</title>
        <authorList>
            <person name="Senda T."/>
            <person name="Saitoh S."/>
            <person name="Mitsui Y."/>
            <person name="Li J."/>
            <person name="Roberts R.M."/>
        </authorList>
    </citation>
    <scope>3D-STRUCTURE MODELING</scope>
</reference>
<reference key="4">
    <citation type="journal article" date="1998" name="Biochimie">
        <title>IFN-tau: a novel subtype I IFN1. Structural characteristics, non-ubiquitous expression, structure-function relationships, a pregnancy hormonal embryonic signal and cross-species therapeutic potentialities.</title>
        <authorList>
            <person name="Martal J.L."/>
            <person name="Chene N.M."/>
            <person name="Huynh L.P."/>
            <person name="L'Haridon R.M."/>
            <person name="Reinaud P.B."/>
            <person name="Guillomot M.W."/>
            <person name="Charlier M.A."/>
            <person name="Charpigny S.Y."/>
        </authorList>
    </citation>
    <scope>REVIEW</scope>
</reference>